<organism>
    <name type="scientific">Shewanella baltica (strain OS195)</name>
    <dbReference type="NCBI Taxonomy" id="399599"/>
    <lineage>
        <taxon>Bacteria</taxon>
        <taxon>Pseudomonadati</taxon>
        <taxon>Pseudomonadota</taxon>
        <taxon>Gammaproteobacteria</taxon>
        <taxon>Alteromonadales</taxon>
        <taxon>Shewanellaceae</taxon>
        <taxon>Shewanella</taxon>
    </lineage>
</organism>
<name>PUR5_SHEB9</name>
<feature type="chain" id="PRO_1000083464" description="Phosphoribosylformylglycinamidine cyclo-ligase">
    <location>
        <begin position="1"/>
        <end position="345"/>
    </location>
</feature>
<evidence type="ECO:0000255" key="1">
    <source>
        <dbReference type="HAMAP-Rule" id="MF_00741"/>
    </source>
</evidence>
<reference key="1">
    <citation type="submission" date="2007-11" db="EMBL/GenBank/DDBJ databases">
        <title>Complete sequence of chromosome of Shewanella baltica OS195.</title>
        <authorList>
            <consortium name="US DOE Joint Genome Institute"/>
            <person name="Copeland A."/>
            <person name="Lucas S."/>
            <person name="Lapidus A."/>
            <person name="Barry K."/>
            <person name="Glavina del Rio T."/>
            <person name="Dalin E."/>
            <person name="Tice H."/>
            <person name="Pitluck S."/>
            <person name="Chain P."/>
            <person name="Malfatti S."/>
            <person name="Shin M."/>
            <person name="Vergez L."/>
            <person name="Schmutz J."/>
            <person name="Larimer F."/>
            <person name="Land M."/>
            <person name="Hauser L."/>
            <person name="Kyrpides N."/>
            <person name="Kim E."/>
            <person name="Brettar I."/>
            <person name="Rodrigues J."/>
            <person name="Konstantinidis K."/>
            <person name="Klappenbach J."/>
            <person name="Hofle M."/>
            <person name="Tiedje J."/>
            <person name="Richardson P."/>
        </authorList>
    </citation>
    <scope>NUCLEOTIDE SEQUENCE [LARGE SCALE GENOMIC DNA]</scope>
    <source>
        <strain>OS195</strain>
    </source>
</reference>
<accession>A9KY38</accession>
<comment type="catalytic activity">
    <reaction evidence="1">
        <text>2-formamido-N(1)-(5-O-phospho-beta-D-ribosyl)acetamidine + ATP = 5-amino-1-(5-phospho-beta-D-ribosyl)imidazole + ADP + phosphate + H(+)</text>
        <dbReference type="Rhea" id="RHEA:23032"/>
        <dbReference type="ChEBI" id="CHEBI:15378"/>
        <dbReference type="ChEBI" id="CHEBI:30616"/>
        <dbReference type="ChEBI" id="CHEBI:43474"/>
        <dbReference type="ChEBI" id="CHEBI:137981"/>
        <dbReference type="ChEBI" id="CHEBI:147287"/>
        <dbReference type="ChEBI" id="CHEBI:456216"/>
        <dbReference type="EC" id="6.3.3.1"/>
    </reaction>
</comment>
<comment type="pathway">
    <text evidence="1">Purine metabolism; IMP biosynthesis via de novo pathway; 5-amino-1-(5-phospho-D-ribosyl)imidazole from N(2)-formyl-N(1)-(5-phospho-D-ribosyl)glycinamide: step 2/2.</text>
</comment>
<comment type="subcellular location">
    <subcellularLocation>
        <location evidence="1">Cytoplasm</location>
    </subcellularLocation>
</comment>
<comment type="similarity">
    <text evidence="1">Belongs to the AIR synthase family.</text>
</comment>
<dbReference type="EC" id="6.3.3.1" evidence="1"/>
<dbReference type="EMBL" id="CP000891">
    <property type="protein sequence ID" value="ABX48944.1"/>
    <property type="molecule type" value="Genomic_DNA"/>
</dbReference>
<dbReference type="RefSeq" id="WP_006081244.1">
    <property type="nucleotide sequence ID" value="NC_009997.1"/>
</dbReference>
<dbReference type="SMR" id="A9KY38"/>
<dbReference type="GeneID" id="11771990"/>
<dbReference type="KEGG" id="sbn:Sbal195_1773"/>
<dbReference type="HOGENOM" id="CLU_047116_0_0_6"/>
<dbReference type="UniPathway" id="UPA00074">
    <property type="reaction ID" value="UER00129"/>
</dbReference>
<dbReference type="Proteomes" id="UP000000770">
    <property type="component" value="Chromosome"/>
</dbReference>
<dbReference type="GO" id="GO:0005829">
    <property type="term" value="C:cytosol"/>
    <property type="evidence" value="ECO:0007669"/>
    <property type="project" value="TreeGrafter"/>
</dbReference>
<dbReference type="GO" id="GO:0005524">
    <property type="term" value="F:ATP binding"/>
    <property type="evidence" value="ECO:0007669"/>
    <property type="project" value="UniProtKB-KW"/>
</dbReference>
<dbReference type="GO" id="GO:0004637">
    <property type="term" value="F:phosphoribosylamine-glycine ligase activity"/>
    <property type="evidence" value="ECO:0007669"/>
    <property type="project" value="TreeGrafter"/>
</dbReference>
<dbReference type="GO" id="GO:0004641">
    <property type="term" value="F:phosphoribosylformylglycinamidine cyclo-ligase activity"/>
    <property type="evidence" value="ECO:0007669"/>
    <property type="project" value="UniProtKB-UniRule"/>
</dbReference>
<dbReference type="GO" id="GO:0006189">
    <property type="term" value="P:'de novo' IMP biosynthetic process"/>
    <property type="evidence" value="ECO:0007669"/>
    <property type="project" value="UniProtKB-UniRule"/>
</dbReference>
<dbReference type="GO" id="GO:0046084">
    <property type="term" value="P:adenine biosynthetic process"/>
    <property type="evidence" value="ECO:0007669"/>
    <property type="project" value="TreeGrafter"/>
</dbReference>
<dbReference type="CDD" id="cd02196">
    <property type="entry name" value="PurM"/>
    <property type="match status" value="1"/>
</dbReference>
<dbReference type="FunFam" id="3.30.1330.10:FF:000001">
    <property type="entry name" value="Phosphoribosylformylglycinamidine cyclo-ligase"/>
    <property type="match status" value="1"/>
</dbReference>
<dbReference type="FunFam" id="3.90.650.10:FF:000001">
    <property type="entry name" value="Phosphoribosylformylglycinamidine cyclo-ligase"/>
    <property type="match status" value="1"/>
</dbReference>
<dbReference type="Gene3D" id="3.90.650.10">
    <property type="entry name" value="PurM-like C-terminal domain"/>
    <property type="match status" value="1"/>
</dbReference>
<dbReference type="Gene3D" id="3.30.1330.10">
    <property type="entry name" value="PurM-like, N-terminal domain"/>
    <property type="match status" value="1"/>
</dbReference>
<dbReference type="HAMAP" id="MF_00741">
    <property type="entry name" value="AIRS"/>
    <property type="match status" value="1"/>
</dbReference>
<dbReference type="InterPro" id="IPR010918">
    <property type="entry name" value="PurM-like_C_dom"/>
</dbReference>
<dbReference type="InterPro" id="IPR036676">
    <property type="entry name" value="PurM-like_C_sf"/>
</dbReference>
<dbReference type="InterPro" id="IPR016188">
    <property type="entry name" value="PurM-like_N"/>
</dbReference>
<dbReference type="InterPro" id="IPR036921">
    <property type="entry name" value="PurM-like_N_sf"/>
</dbReference>
<dbReference type="InterPro" id="IPR004733">
    <property type="entry name" value="PurM_cligase"/>
</dbReference>
<dbReference type="NCBIfam" id="TIGR00878">
    <property type="entry name" value="purM"/>
    <property type="match status" value="1"/>
</dbReference>
<dbReference type="PANTHER" id="PTHR10520:SF12">
    <property type="entry name" value="TRIFUNCTIONAL PURINE BIOSYNTHETIC PROTEIN ADENOSINE-3"/>
    <property type="match status" value="1"/>
</dbReference>
<dbReference type="PANTHER" id="PTHR10520">
    <property type="entry name" value="TRIFUNCTIONAL PURINE BIOSYNTHETIC PROTEIN ADENOSINE-3-RELATED"/>
    <property type="match status" value="1"/>
</dbReference>
<dbReference type="Pfam" id="PF00586">
    <property type="entry name" value="AIRS"/>
    <property type="match status" value="1"/>
</dbReference>
<dbReference type="Pfam" id="PF02769">
    <property type="entry name" value="AIRS_C"/>
    <property type="match status" value="1"/>
</dbReference>
<dbReference type="SUPFAM" id="SSF56042">
    <property type="entry name" value="PurM C-terminal domain-like"/>
    <property type="match status" value="1"/>
</dbReference>
<dbReference type="SUPFAM" id="SSF55326">
    <property type="entry name" value="PurM N-terminal domain-like"/>
    <property type="match status" value="1"/>
</dbReference>
<proteinExistence type="inferred from homology"/>
<gene>
    <name evidence="1" type="primary">purM</name>
    <name type="ordered locus">Sbal195_1773</name>
</gene>
<protein>
    <recommendedName>
        <fullName evidence="1">Phosphoribosylformylglycinamidine cyclo-ligase</fullName>
        <ecNumber evidence="1">6.3.3.1</ecNumber>
    </recommendedName>
    <alternativeName>
        <fullName evidence="1">AIR synthase</fullName>
    </alternativeName>
    <alternativeName>
        <fullName evidence="1">AIRS</fullName>
    </alternativeName>
    <alternativeName>
        <fullName evidence="1">Phosphoribosyl-aminoimidazole synthetase</fullName>
    </alternativeName>
</protein>
<keyword id="KW-0067">ATP-binding</keyword>
<keyword id="KW-0963">Cytoplasm</keyword>
<keyword id="KW-0436">Ligase</keyword>
<keyword id="KW-0547">Nucleotide-binding</keyword>
<keyword id="KW-0658">Purine biosynthesis</keyword>
<sequence>MSTPTPLSYKDAGVDIDAGNALVSNIKAAVKRTRRPEVMGNLGGFGALCEIPTKYKQPVLVSGTDGVGTKLRLAIDYKKHDTVGIDLVAMCVNDLIVQGAEPLFFLDYYATGKLDVETATSVVNGIGEGCFQSGCALIGGETAEMPGMYEGEDYDLAGFCVGVVEKADIIDGSKVAAGDALIALASSGPHSNGYSLVRKVLEVSQADPQQDLNGKPLIEHLLEPTKIYVKSLLKLIAASDVHAMAHITGGGFWENIPRVLPDNLKAVIQGDSWQWPAVFSWLMENGNIAEYEMYRTFNCGVGMLVALPADKVDAALALLAAEGEQAWLIGAIADREGNEEQVEIL</sequence>